<keyword id="KW-1185">Reference proteome</keyword>
<dbReference type="EMBL" id="L42023">
    <property type="protein sequence ID" value="AAC23057.1"/>
    <property type="molecule type" value="Genomic_DNA"/>
</dbReference>
<dbReference type="PIR" id="D64028">
    <property type="entry name" value="D64028"/>
</dbReference>
<dbReference type="RefSeq" id="NP_439560.1">
    <property type="nucleotide sequence ID" value="NC_000907.1"/>
</dbReference>
<dbReference type="SMR" id="P44183"/>
<dbReference type="STRING" id="71421.HI_1409"/>
<dbReference type="DNASU" id="950321"/>
<dbReference type="EnsemblBacteria" id="AAC23057">
    <property type="protein sequence ID" value="AAC23057"/>
    <property type="gene ID" value="HI_1409"/>
</dbReference>
<dbReference type="KEGG" id="hin:HI_1409"/>
<dbReference type="PATRIC" id="fig|71421.8.peg.1468"/>
<dbReference type="eggNOG" id="COG3567">
    <property type="taxonomic scope" value="Bacteria"/>
</dbReference>
<dbReference type="HOGENOM" id="CLU_027488_2_1_6"/>
<dbReference type="OrthoDB" id="2019396at2"/>
<dbReference type="PhylomeDB" id="P44183"/>
<dbReference type="BioCyc" id="HINF71421:G1GJ1-1433-MONOMER"/>
<dbReference type="Proteomes" id="UP000000579">
    <property type="component" value="Chromosome"/>
</dbReference>
<dbReference type="InterPro" id="IPR024459">
    <property type="entry name" value="Acb1-like_N"/>
</dbReference>
<dbReference type="InterPro" id="IPR006445">
    <property type="entry name" value="Phage-assoc_HI1409"/>
</dbReference>
<dbReference type="NCBIfam" id="TIGR01555">
    <property type="entry name" value="phge_rel_HI1409"/>
    <property type="match status" value="1"/>
</dbReference>
<dbReference type="Pfam" id="PF06381">
    <property type="entry name" value="Phage_portal_3"/>
    <property type="match status" value="1"/>
</dbReference>
<name>Y1409_HAEIN</name>
<organism>
    <name type="scientific">Haemophilus influenzae (strain ATCC 51907 / DSM 11121 / KW20 / Rd)</name>
    <dbReference type="NCBI Taxonomy" id="71421"/>
    <lineage>
        <taxon>Bacteria</taxon>
        <taxon>Pseudomonadati</taxon>
        <taxon>Pseudomonadota</taxon>
        <taxon>Gammaproteobacteria</taxon>
        <taxon>Pasteurellales</taxon>
        <taxon>Pasteurellaceae</taxon>
        <taxon>Haemophilus</taxon>
    </lineage>
</organism>
<reference key="1">
    <citation type="journal article" date="1995" name="Science">
        <title>Whole-genome random sequencing and assembly of Haemophilus influenzae Rd.</title>
        <authorList>
            <person name="Fleischmann R.D."/>
            <person name="Adams M.D."/>
            <person name="White O."/>
            <person name="Clayton R.A."/>
            <person name="Kirkness E.F."/>
            <person name="Kerlavage A.R."/>
            <person name="Bult C.J."/>
            <person name="Tomb J.-F."/>
            <person name="Dougherty B.A."/>
            <person name="Merrick J.M."/>
            <person name="McKenney K."/>
            <person name="Sutton G.G."/>
            <person name="FitzHugh W."/>
            <person name="Fields C.A."/>
            <person name="Gocayne J.D."/>
            <person name="Scott J.D."/>
            <person name="Shirley R."/>
            <person name="Liu L.-I."/>
            <person name="Glodek A."/>
            <person name="Kelley J.M."/>
            <person name="Weidman J.F."/>
            <person name="Phillips C.A."/>
            <person name="Spriggs T."/>
            <person name="Hedblom E."/>
            <person name="Cotton M.D."/>
            <person name="Utterback T.R."/>
            <person name="Hanna M.C."/>
            <person name="Nguyen D.T."/>
            <person name="Saudek D.M."/>
            <person name="Brandon R.C."/>
            <person name="Fine L.D."/>
            <person name="Fritchman J.L."/>
            <person name="Fuhrmann J.L."/>
            <person name="Geoghagen N.S.M."/>
            <person name="Gnehm C.L."/>
            <person name="McDonald L.A."/>
            <person name="Small K.V."/>
            <person name="Fraser C.M."/>
            <person name="Smith H.O."/>
            <person name="Venter J.C."/>
        </authorList>
    </citation>
    <scope>NUCLEOTIDE SEQUENCE [LARGE SCALE GENOMIC DNA]</scope>
    <source>
        <strain>ATCC 51907 / DSM 11121 / KW20 / Rd</strain>
    </source>
</reference>
<gene>
    <name type="ordered locus">HI_1409</name>
</gene>
<proteinExistence type="predicted"/>
<sequence length="436" mass="48921">MNILDGIKSLALKLGSKQDQTYYARGLSLTDDLMQIEALWRDNWIANKVCIKRSEDMVRNWRDIFSNDLKSEQLDEFTKLERRLKLRETLTKALQWSSLYGAVGLLVVTDTINITSPLQPTERLKRLIILPKWKISPTGQRDDDVFSPNFGRYSEYTITGGTQSVSVHHSRLLIINANDAPLSDNDIWGVSDLEKIIDVLKRFDSASANVGDLIFESKIDIFKIAGLSDKISAGLENDVAHVISAVQSIKSATNSLLLDAENEYDRKELSFGGLKDLLTEFRNAVAGAADMPVTILFGQSVSGLASGDEDIQNYHESIHRLQETRLRPVLEVLDTLLCNELFGGQPDDWWFEFLPLTVVKQEQQVNMLNTFATAANTLIQNGVVNEYQVANELRESGLFANISADDIEEMKNANELARNFEEPEGESTQVQASEDE</sequence>
<accession>P44183</accession>
<protein>
    <recommendedName>
        <fullName>Uncharacterized protein HI_1409</fullName>
    </recommendedName>
</protein>
<feature type="chain" id="PRO_0000078046" description="Uncharacterized protein HI_1409">
    <location>
        <begin position="1"/>
        <end position="436"/>
    </location>
</feature>